<feature type="chain" id="PRO_1000120753" description="Small ribosomal subunit protein bS6">
    <location>
        <begin position="1"/>
        <end position="131"/>
    </location>
</feature>
<feature type="region of interest" description="Disordered" evidence="2">
    <location>
        <begin position="98"/>
        <end position="131"/>
    </location>
</feature>
<feature type="compositionally biased region" description="Basic and acidic residues" evidence="2">
    <location>
        <begin position="104"/>
        <end position="116"/>
    </location>
</feature>
<feature type="compositionally biased region" description="Acidic residues" evidence="2">
    <location>
        <begin position="120"/>
        <end position="131"/>
    </location>
</feature>
<feature type="modified residue" description="N6-acetyllysine" evidence="1">
    <location>
        <position position="93"/>
    </location>
</feature>
<keyword id="KW-0007">Acetylation</keyword>
<keyword id="KW-0687">Ribonucleoprotein</keyword>
<keyword id="KW-0689">Ribosomal protein</keyword>
<keyword id="KW-0694">RNA-binding</keyword>
<keyword id="KW-0699">rRNA-binding</keyword>
<comment type="function">
    <text evidence="1">Binds together with bS18 to 16S ribosomal RNA.</text>
</comment>
<comment type="similarity">
    <text evidence="1">Belongs to the bacterial ribosomal protein bS6 family.</text>
</comment>
<dbReference type="EMBL" id="CU928158">
    <property type="protein sequence ID" value="CAQ91672.1"/>
    <property type="molecule type" value="Genomic_DNA"/>
</dbReference>
<dbReference type="RefSeq" id="WP_001216676.1">
    <property type="nucleotide sequence ID" value="NC_011740.1"/>
</dbReference>
<dbReference type="SMR" id="B7LLY2"/>
<dbReference type="GeneID" id="93777623"/>
<dbReference type="KEGG" id="efe:EFER_4253"/>
<dbReference type="HOGENOM" id="CLU_113441_6_1_6"/>
<dbReference type="OrthoDB" id="9812702at2"/>
<dbReference type="Proteomes" id="UP000000745">
    <property type="component" value="Chromosome"/>
</dbReference>
<dbReference type="GO" id="GO:0022627">
    <property type="term" value="C:cytosolic small ribosomal subunit"/>
    <property type="evidence" value="ECO:0007669"/>
    <property type="project" value="TreeGrafter"/>
</dbReference>
<dbReference type="GO" id="GO:0070181">
    <property type="term" value="F:small ribosomal subunit rRNA binding"/>
    <property type="evidence" value="ECO:0007669"/>
    <property type="project" value="TreeGrafter"/>
</dbReference>
<dbReference type="GO" id="GO:0003735">
    <property type="term" value="F:structural constituent of ribosome"/>
    <property type="evidence" value="ECO:0007669"/>
    <property type="project" value="InterPro"/>
</dbReference>
<dbReference type="GO" id="GO:0006412">
    <property type="term" value="P:translation"/>
    <property type="evidence" value="ECO:0007669"/>
    <property type="project" value="UniProtKB-UniRule"/>
</dbReference>
<dbReference type="CDD" id="cd00473">
    <property type="entry name" value="bS6"/>
    <property type="match status" value="1"/>
</dbReference>
<dbReference type="FunFam" id="3.30.70.60:FF:000003">
    <property type="entry name" value="30S ribosomal protein S6"/>
    <property type="match status" value="1"/>
</dbReference>
<dbReference type="Gene3D" id="3.30.70.60">
    <property type="match status" value="1"/>
</dbReference>
<dbReference type="HAMAP" id="MF_00360">
    <property type="entry name" value="Ribosomal_bS6"/>
    <property type="match status" value="1"/>
</dbReference>
<dbReference type="InterPro" id="IPR000529">
    <property type="entry name" value="Ribosomal_bS6"/>
</dbReference>
<dbReference type="InterPro" id="IPR020815">
    <property type="entry name" value="Ribosomal_bS6_CS"/>
</dbReference>
<dbReference type="InterPro" id="IPR035980">
    <property type="entry name" value="Ribosomal_bS6_sf"/>
</dbReference>
<dbReference type="InterPro" id="IPR020814">
    <property type="entry name" value="Ribosomal_S6_plastid/chlpt"/>
</dbReference>
<dbReference type="InterPro" id="IPR014717">
    <property type="entry name" value="Transl_elong_EF1B/ribsomal_bS6"/>
</dbReference>
<dbReference type="NCBIfam" id="TIGR00166">
    <property type="entry name" value="S6"/>
    <property type="match status" value="1"/>
</dbReference>
<dbReference type="PANTHER" id="PTHR21011">
    <property type="entry name" value="MITOCHONDRIAL 28S RIBOSOMAL PROTEIN S6"/>
    <property type="match status" value="1"/>
</dbReference>
<dbReference type="PANTHER" id="PTHR21011:SF1">
    <property type="entry name" value="SMALL RIBOSOMAL SUBUNIT PROTEIN BS6M"/>
    <property type="match status" value="1"/>
</dbReference>
<dbReference type="Pfam" id="PF01250">
    <property type="entry name" value="Ribosomal_S6"/>
    <property type="match status" value="1"/>
</dbReference>
<dbReference type="SUPFAM" id="SSF54995">
    <property type="entry name" value="Ribosomal protein S6"/>
    <property type="match status" value="1"/>
</dbReference>
<dbReference type="PROSITE" id="PS01048">
    <property type="entry name" value="RIBOSOMAL_S6"/>
    <property type="match status" value="1"/>
</dbReference>
<evidence type="ECO:0000255" key="1">
    <source>
        <dbReference type="HAMAP-Rule" id="MF_00360"/>
    </source>
</evidence>
<evidence type="ECO:0000256" key="2">
    <source>
        <dbReference type="SAM" id="MobiDB-lite"/>
    </source>
</evidence>
<evidence type="ECO:0000305" key="3"/>
<name>RS6_ESCF3</name>
<reference key="1">
    <citation type="journal article" date="2009" name="PLoS Genet.">
        <title>Organised genome dynamics in the Escherichia coli species results in highly diverse adaptive paths.</title>
        <authorList>
            <person name="Touchon M."/>
            <person name="Hoede C."/>
            <person name="Tenaillon O."/>
            <person name="Barbe V."/>
            <person name="Baeriswyl S."/>
            <person name="Bidet P."/>
            <person name="Bingen E."/>
            <person name="Bonacorsi S."/>
            <person name="Bouchier C."/>
            <person name="Bouvet O."/>
            <person name="Calteau A."/>
            <person name="Chiapello H."/>
            <person name="Clermont O."/>
            <person name="Cruveiller S."/>
            <person name="Danchin A."/>
            <person name="Diard M."/>
            <person name="Dossat C."/>
            <person name="Karoui M.E."/>
            <person name="Frapy E."/>
            <person name="Garry L."/>
            <person name="Ghigo J.M."/>
            <person name="Gilles A.M."/>
            <person name="Johnson J."/>
            <person name="Le Bouguenec C."/>
            <person name="Lescat M."/>
            <person name="Mangenot S."/>
            <person name="Martinez-Jehanne V."/>
            <person name="Matic I."/>
            <person name="Nassif X."/>
            <person name="Oztas S."/>
            <person name="Petit M.A."/>
            <person name="Pichon C."/>
            <person name="Rouy Z."/>
            <person name="Ruf C.S."/>
            <person name="Schneider D."/>
            <person name="Tourret J."/>
            <person name="Vacherie B."/>
            <person name="Vallenet D."/>
            <person name="Medigue C."/>
            <person name="Rocha E.P.C."/>
            <person name="Denamur E."/>
        </authorList>
    </citation>
    <scope>NUCLEOTIDE SEQUENCE [LARGE SCALE GENOMIC DNA]</scope>
    <source>
        <strain>ATCC 35469 / DSM 13698 / BCRC 15582 / CCUG 18766 / IAM 14443 / JCM 21226 / LMG 7866 / NBRC 102419 / NCTC 12128 / CDC 0568-73</strain>
    </source>
</reference>
<proteinExistence type="inferred from homology"/>
<accession>B7LLY2</accession>
<protein>
    <recommendedName>
        <fullName evidence="1">Small ribosomal subunit protein bS6</fullName>
    </recommendedName>
    <alternativeName>
        <fullName evidence="3">30S ribosomal protein S6</fullName>
    </alternativeName>
</protein>
<organism>
    <name type="scientific">Escherichia fergusonii (strain ATCC 35469 / DSM 13698 / CCUG 18766 / IAM 14443 / JCM 21226 / LMG 7866 / NBRC 102419 / NCTC 12128 / CDC 0568-73)</name>
    <dbReference type="NCBI Taxonomy" id="585054"/>
    <lineage>
        <taxon>Bacteria</taxon>
        <taxon>Pseudomonadati</taxon>
        <taxon>Pseudomonadota</taxon>
        <taxon>Gammaproteobacteria</taxon>
        <taxon>Enterobacterales</taxon>
        <taxon>Enterobacteriaceae</taxon>
        <taxon>Escherichia</taxon>
    </lineage>
</organism>
<gene>
    <name evidence="1" type="primary">rpsF</name>
    <name type="ordered locus">EFER_4253</name>
</gene>
<sequence>MRHYEIVFMVHPDQSEQVPGMIERYTAAITGAEGKIHRLEDWGRRQLAYPINKLHKAHYVLMNVEAPQEVIDELETTFRFNDAVIRSMVMRTKHAVTEASPMVKAKDERRERRDDFANETADDAEAGDSEE</sequence>